<protein>
    <recommendedName>
        <fullName evidence="1">Small ribosomal subunit protein bS6</fullName>
    </recommendedName>
    <alternativeName>
        <fullName evidence="3">30S ribosomal protein S6</fullName>
    </alternativeName>
</protein>
<name>RS6_SHEPC</name>
<gene>
    <name evidence="1" type="primary">rpsF</name>
    <name type="ordered locus">Sputcn32_0753</name>
</gene>
<accession>A4Y3F0</accession>
<comment type="function">
    <text evidence="1">Binds together with bS18 to 16S ribosomal RNA.</text>
</comment>
<comment type="similarity">
    <text evidence="1">Belongs to the bacterial ribosomal protein bS6 family.</text>
</comment>
<sequence>MRHYEIVFMVHPDQSEQVPGMIERYTGVITEANGTIHRLEDWGRRQLAYPIQDLHKAHYVLMNVEAPAETIEELETAFRFNDAVLRNMVMRTKVAVTEASPMARARDERDSRRGPAGERSYDEAHAEEIGE</sequence>
<evidence type="ECO:0000255" key="1">
    <source>
        <dbReference type="HAMAP-Rule" id="MF_00360"/>
    </source>
</evidence>
<evidence type="ECO:0000256" key="2">
    <source>
        <dbReference type="SAM" id="MobiDB-lite"/>
    </source>
</evidence>
<evidence type="ECO:0000305" key="3"/>
<keyword id="KW-0687">Ribonucleoprotein</keyword>
<keyword id="KW-0689">Ribosomal protein</keyword>
<keyword id="KW-0694">RNA-binding</keyword>
<keyword id="KW-0699">rRNA-binding</keyword>
<organism>
    <name type="scientific">Shewanella putrefaciens (strain CN-32 / ATCC BAA-453)</name>
    <dbReference type="NCBI Taxonomy" id="319224"/>
    <lineage>
        <taxon>Bacteria</taxon>
        <taxon>Pseudomonadati</taxon>
        <taxon>Pseudomonadota</taxon>
        <taxon>Gammaproteobacteria</taxon>
        <taxon>Alteromonadales</taxon>
        <taxon>Shewanellaceae</taxon>
        <taxon>Shewanella</taxon>
    </lineage>
</organism>
<proteinExistence type="inferred from homology"/>
<reference key="1">
    <citation type="submission" date="2007-04" db="EMBL/GenBank/DDBJ databases">
        <title>Complete sequence of Shewanella putrefaciens CN-32.</title>
        <authorList>
            <consortium name="US DOE Joint Genome Institute"/>
            <person name="Copeland A."/>
            <person name="Lucas S."/>
            <person name="Lapidus A."/>
            <person name="Barry K."/>
            <person name="Detter J.C."/>
            <person name="Glavina del Rio T."/>
            <person name="Hammon N."/>
            <person name="Israni S."/>
            <person name="Dalin E."/>
            <person name="Tice H."/>
            <person name="Pitluck S."/>
            <person name="Chain P."/>
            <person name="Malfatti S."/>
            <person name="Shin M."/>
            <person name="Vergez L."/>
            <person name="Schmutz J."/>
            <person name="Larimer F."/>
            <person name="Land M."/>
            <person name="Hauser L."/>
            <person name="Kyrpides N."/>
            <person name="Mikhailova N."/>
            <person name="Romine M.F."/>
            <person name="Fredrickson J."/>
            <person name="Tiedje J."/>
            <person name="Richardson P."/>
        </authorList>
    </citation>
    <scope>NUCLEOTIDE SEQUENCE [LARGE SCALE GENOMIC DNA]</scope>
    <source>
        <strain>CN-32 / ATCC BAA-453</strain>
    </source>
</reference>
<feature type="chain" id="PRO_1000005349" description="Small ribosomal subunit protein bS6">
    <location>
        <begin position="1"/>
        <end position="131"/>
    </location>
</feature>
<feature type="region of interest" description="Disordered" evidence="2">
    <location>
        <begin position="98"/>
        <end position="131"/>
    </location>
</feature>
<feature type="compositionally biased region" description="Basic and acidic residues" evidence="2">
    <location>
        <begin position="104"/>
        <end position="131"/>
    </location>
</feature>
<dbReference type="EMBL" id="CP000681">
    <property type="protein sequence ID" value="ABP74483.1"/>
    <property type="molecule type" value="Genomic_DNA"/>
</dbReference>
<dbReference type="SMR" id="A4Y3F0"/>
<dbReference type="STRING" id="319224.Sputcn32_0753"/>
<dbReference type="KEGG" id="spc:Sputcn32_0753"/>
<dbReference type="eggNOG" id="COG0360">
    <property type="taxonomic scope" value="Bacteria"/>
</dbReference>
<dbReference type="HOGENOM" id="CLU_113441_6_1_6"/>
<dbReference type="GO" id="GO:0022627">
    <property type="term" value="C:cytosolic small ribosomal subunit"/>
    <property type="evidence" value="ECO:0007669"/>
    <property type="project" value="TreeGrafter"/>
</dbReference>
<dbReference type="GO" id="GO:0070181">
    <property type="term" value="F:small ribosomal subunit rRNA binding"/>
    <property type="evidence" value="ECO:0007669"/>
    <property type="project" value="TreeGrafter"/>
</dbReference>
<dbReference type="GO" id="GO:0003735">
    <property type="term" value="F:structural constituent of ribosome"/>
    <property type="evidence" value="ECO:0007669"/>
    <property type="project" value="InterPro"/>
</dbReference>
<dbReference type="GO" id="GO:0006412">
    <property type="term" value="P:translation"/>
    <property type="evidence" value="ECO:0007669"/>
    <property type="project" value="UniProtKB-UniRule"/>
</dbReference>
<dbReference type="CDD" id="cd00473">
    <property type="entry name" value="bS6"/>
    <property type="match status" value="1"/>
</dbReference>
<dbReference type="FunFam" id="3.30.70.60:FF:000003">
    <property type="entry name" value="30S ribosomal protein S6"/>
    <property type="match status" value="1"/>
</dbReference>
<dbReference type="Gene3D" id="3.30.70.60">
    <property type="match status" value="1"/>
</dbReference>
<dbReference type="HAMAP" id="MF_00360">
    <property type="entry name" value="Ribosomal_bS6"/>
    <property type="match status" value="1"/>
</dbReference>
<dbReference type="InterPro" id="IPR000529">
    <property type="entry name" value="Ribosomal_bS6"/>
</dbReference>
<dbReference type="InterPro" id="IPR035980">
    <property type="entry name" value="Ribosomal_bS6_sf"/>
</dbReference>
<dbReference type="InterPro" id="IPR020814">
    <property type="entry name" value="Ribosomal_S6_plastid/chlpt"/>
</dbReference>
<dbReference type="InterPro" id="IPR014717">
    <property type="entry name" value="Transl_elong_EF1B/ribsomal_bS6"/>
</dbReference>
<dbReference type="NCBIfam" id="TIGR00166">
    <property type="entry name" value="S6"/>
    <property type="match status" value="1"/>
</dbReference>
<dbReference type="PANTHER" id="PTHR21011">
    <property type="entry name" value="MITOCHONDRIAL 28S RIBOSOMAL PROTEIN S6"/>
    <property type="match status" value="1"/>
</dbReference>
<dbReference type="PANTHER" id="PTHR21011:SF1">
    <property type="entry name" value="SMALL RIBOSOMAL SUBUNIT PROTEIN BS6M"/>
    <property type="match status" value="1"/>
</dbReference>
<dbReference type="Pfam" id="PF01250">
    <property type="entry name" value="Ribosomal_S6"/>
    <property type="match status" value="1"/>
</dbReference>
<dbReference type="SUPFAM" id="SSF54995">
    <property type="entry name" value="Ribosomal protein S6"/>
    <property type="match status" value="1"/>
</dbReference>